<sequence>MTQVLLNPSLEEAYHFLVKNMYNNLITLFGDCEIQYEGRAYSHASLASRLIIIKVDGSVIVHEHTKREPINWQPPGSVIVVRKESGVLSIESIRKRPKERLYIILRRLYYLTSAEVNSGNFDIKGTEKDIVDLVLENPNLIEEGFKPIQREYRIPYGIVDLFGYDKFGTPFVLEFKRSKATLQAVSQLHRYYMFFLESYGKARGALVSPGISEKALNLIEKLRLEYIDANRIFDSITNSSRYTINISNIQRS</sequence>
<feature type="chain" id="PRO_0000155701" description="Endonuclease NucS">
    <location>
        <begin position="1"/>
        <end position="252"/>
    </location>
</feature>
<name>NUCS_SULTO</name>
<protein>
    <recommendedName>
        <fullName evidence="1">Endonuclease NucS</fullName>
        <ecNumber evidence="1">3.1.-.-</ecNumber>
    </recommendedName>
</protein>
<accession>Q96Y77</accession>
<keyword id="KW-0963">Cytoplasm</keyword>
<keyword id="KW-0238">DNA-binding</keyword>
<keyword id="KW-0255">Endonuclease</keyword>
<keyword id="KW-0378">Hydrolase</keyword>
<keyword id="KW-0540">Nuclease</keyword>
<keyword id="KW-1185">Reference proteome</keyword>
<reference key="1">
    <citation type="journal article" date="2001" name="DNA Res.">
        <title>Complete genome sequence of an aerobic thermoacidophilic Crenarchaeon, Sulfolobus tokodaii strain7.</title>
        <authorList>
            <person name="Kawarabayasi Y."/>
            <person name="Hino Y."/>
            <person name="Horikawa H."/>
            <person name="Jin-no K."/>
            <person name="Takahashi M."/>
            <person name="Sekine M."/>
            <person name="Baba S."/>
            <person name="Ankai A."/>
            <person name="Kosugi H."/>
            <person name="Hosoyama A."/>
            <person name="Fukui S."/>
            <person name="Nagai Y."/>
            <person name="Nishijima K."/>
            <person name="Otsuka R."/>
            <person name="Nakazawa H."/>
            <person name="Takamiya M."/>
            <person name="Kato Y."/>
            <person name="Yoshizawa T."/>
            <person name="Tanaka T."/>
            <person name="Kudoh Y."/>
            <person name="Yamazaki J."/>
            <person name="Kushida N."/>
            <person name="Oguchi A."/>
            <person name="Aoki K."/>
            <person name="Masuda S."/>
            <person name="Yanagii M."/>
            <person name="Nishimura M."/>
            <person name="Yamagishi A."/>
            <person name="Oshima T."/>
            <person name="Kikuchi H."/>
        </authorList>
    </citation>
    <scope>NUCLEOTIDE SEQUENCE [LARGE SCALE GENOMIC DNA]</scope>
    <source>
        <strain>DSM 16993 / JCM 10545 / NBRC 100140 / 7</strain>
    </source>
</reference>
<dbReference type="EC" id="3.1.-.-" evidence="1"/>
<dbReference type="EMBL" id="BA000023">
    <property type="protein sequence ID" value="BAB67400.1"/>
    <property type="molecule type" value="Genomic_DNA"/>
</dbReference>
<dbReference type="RefSeq" id="WP_010980375.1">
    <property type="nucleotide sequence ID" value="NC_003106.2"/>
</dbReference>
<dbReference type="SMR" id="Q96Y77"/>
<dbReference type="STRING" id="273063.STK_22900"/>
<dbReference type="GeneID" id="1460373"/>
<dbReference type="KEGG" id="sto:STK_22900"/>
<dbReference type="PATRIC" id="fig|273063.9.peg.2597"/>
<dbReference type="eggNOG" id="arCOG01304">
    <property type="taxonomic scope" value="Archaea"/>
</dbReference>
<dbReference type="OrthoDB" id="15177at2157"/>
<dbReference type="Proteomes" id="UP000001015">
    <property type="component" value="Chromosome"/>
</dbReference>
<dbReference type="GO" id="GO:0005737">
    <property type="term" value="C:cytoplasm"/>
    <property type="evidence" value="ECO:0007669"/>
    <property type="project" value="UniProtKB-SubCell"/>
</dbReference>
<dbReference type="GO" id="GO:0003677">
    <property type="term" value="F:DNA binding"/>
    <property type="evidence" value="ECO:0007669"/>
    <property type="project" value="UniProtKB-KW"/>
</dbReference>
<dbReference type="GO" id="GO:0000014">
    <property type="term" value="F:single-stranded DNA endodeoxyribonuclease activity"/>
    <property type="evidence" value="ECO:0007669"/>
    <property type="project" value="UniProtKB-UniRule"/>
</dbReference>
<dbReference type="CDD" id="cd22341">
    <property type="entry name" value="NucS-like"/>
    <property type="match status" value="1"/>
</dbReference>
<dbReference type="Gene3D" id="2.70.180.20">
    <property type="match status" value="1"/>
</dbReference>
<dbReference type="Gene3D" id="3.40.1350.10">
    <property type="match status" value="1"/>
</dbReference>
<dbReference type="HAMAP" id="MF_00722">
    <property type="entry name" value="NucS"/>
    <property type="match status" value="1"/>
</dbReference>
<dbReference type="InterPro" id="IPR002793">
    <property type="entry name" value="Endonuclease_NucS"/>
</dbReference>
<dbReference type="InterPro" id="IPR048301">
    <property type="entry name" value="NucS_C"/>
</dbReference>
<dbReference type="InterPro" id="IPR048302">
    <property type="entry name" value="NucS_N"/>
</dbReference>
<dbReference type="InterPro" id="IPR049173">
    <property type="entry name" value="NucS_N_sf"/>
</dbReference>
<dbReference type="InterPro" id="IPR011856">
    <property type="entry name" value="tRNA_endonuc-like_dom_sf"/>
</dbReference>
<dbReference type="NCBIfam" id="NF003270">
    <property type="entry name" value="PRK04247.1"/>
    <property type="match status" value="1"/>
</dbReference>
<dbReference type="PANTHER" id="PTHR38814">
    <property type="entry name" value="ENDONUCLEASE NUCS"/>
    <property type="match status" value="1"/>
</dbReference>
<dbReference type="PANTHER" id="PTHR38814:SF1">
    <property type="entry name" value="ENDONUCLEASE NUCS"/>
    <property type="match status" value="1"/>
</dbReference>
<dbReference type="Pfam" id="PF01939">
    <property type="entry name" value="NucS_C"/>
    <property type="match status" value="1"/>
</dbReference>
<dbReference type="Pfam" id="PF21003">
    <property type="entry name" value="NucS_N"/>
    <property type="match status" value="1"/>
</dbReference>
<organism>
    <name type="scientific">Sulfurisphaera tokodaii (strain DSM 16993 / JCM 10545 / NBRC 100140 / 7)</name>
    <name type="common">Sulfolobus tokodaii</name>
    <dbReference type="NCBI Taxonomy" id="273063"/>
    <lineage>
        <taxon>Archaea</taxon>
        <taxon>Thermoproteota</taxon>
        <taxon>Thermoprotei</taxon>
        <taxon>Sulfolobales</taxon>
        <taxon>Sulfolobaceae</taxon>
        <taxon>Sulfurisphaera</taxon>
    </lineage>
</organism>
<gene>
    <name evidence="1" type="primary">nucS</name>
    <name type="ordered locus">STK_22900</name>
</gene>
<comment type="function">
    <text evidence="1">Cleaves both 3' and 5' ssDNA extremities of branched DNA structures.</text>
</comment>
<comment type="subcellular location">
    <subcellularLocation>
        <location evidence="1">Cytoplasm</location>
    </subcellularLocation>
</comment>
<comment type="similarity">
    <text evidence="1">Belongs to the NucS endonuclease family.</text>
</comment>
<evidence type="ECO:0000255" key="1">
    <source>
        <dbReference type="HAMAP-Rule" id="MF_00722"/>
    </source>
</evidence>
<proteinExistence type="inferred from homology"/>